<dbReference type="EC" id="2.1.1.360" evidence="1 8"/>
<dbReference type="EMBL" id="BX284601">
    <property type="protein sequence ID" value="CCD69916.1"/>
    <property type="molecule type" value="Genomic_DNA"/>
</dbReference>
<dbReference type="EMBL" id="BX284601">
    <property type="protein sequence ID" value="CCD69917.1"/>
    <property type="molecule type" value="Genomic_DNA"/>
</dbReference>
<dbReference type="EMBL" id="BX284601">
    <property type="protein sequence ID" value="CDR32823.1"/>
    <property type="molecule type" value="Genomic_DNA"/>
</dbReference>
<dbReference type="RefSeq" id="NP_001293323.1">
    <property type="nucleotide sequence ID" value="NM_001306394.1"/>
</dbReference>
<dbReference type="RefSeq" id="NP_001368488.1">
    <molecule id="Q6AW06-3"/>
    <property type="nucleotide sequence ID" value="NM_001381392.1"/>
</dbReference>
<dbReference type="RefSeq" id="NP_740808.2">
    <molecule id="Q6AW06-1"/>
    <property type="nucleotide sequence ID" value="NM_170824.4"/>
</dbReference>
<dbReference type="RefSeq" id="NP_740809.2">
    <molecule id="Q6AW06-2"/>
    <property type="nucleotide sequence ID" value="NM_170825.4"/>
</dbReference>
<dbReference type="SMR" id="Q6AW06"/>
<dbReference type="ComplexPortal" id="CPX-4127">
    <property type="entry name" value="ZFP-1(AF10)/DOT-1 complex"/>
</dbReference>
<dbReference type="FunCoup" id="Q6AW06">
    <property type="interactions" value="416"/>
</dbReference>
<dbReference type="IntAct" id="Q6AW06">
    <property type="interactions" value="1"/>
</dbReference>
<dbReference type="STRING" id="6239.Y39G10AR.18a.1"/>
<dbReference type="PaxDb" id="6239-Y39G10AR.18a.2"/>
<dbReference type="PeptideAtlas" id="Q6AW06"/>
<dbReference type="EnsemblMetazoa" id="Y39G10AR.18a.1">
    <molecule id="Q6AW06-1"/>
    <property type="protein sequence ID" value="Y39G10AR.18a.1"/>
    <property type="gene ID" value="WBGene00021474"/>
</dbReference>
<dbReference type="EnsemblMetazoa" id="Y39G10AR.18b.1">
    <molecule id="Q6AW06-2"/>
    <property type="protein sequence ID" value="Y39G10AR.18b.1"/>
    <property type="gene ID" value="WBGene00021474"/>
</dbReference>
<dbReference type="EnsemblMetazoa" id="Y39G10AR.18b.2">
    <molecule id="Q6AW06-2"/>
    <property type="protein sequence ID" value="Y39G10AR.18b.2"/>
    <property type="gene ID" value="WBGene00021474"/>
</dbReference>
<dbReference type="EnsemblMetazoa" id="Y39G10AR.18c.1">
    <molecule id="Q6AW06-3"/>
    <property type="protein sequence ID" value="Y39G10AR.18c.1"/>
    <property type="gene ID" value="WBGene00021474"/>
</dbReference>
<dbReference type="GeneID" id="171797"/>
<dbReference type="KEGG" id="cel:CELE_Y39G10AR.18"/>
<dbReference type="UCSC" id="Y39G10AR.18a">
    <property type="organism name" value="c. elegans"/>
</dbReference>
<dbReference type="AGR" id="WB:WBGene00021474"/>
<dbReference type="CTD" id="171797"/>
<dbReference type="WormBase" id="Y39G10AR.18a">
    <molecule id="Q6AW06-1"/>
    <property type="protein sequence ID" value="CE38003"/>
    <property type="gene ID" value="WBGene00021474"/>
    <property type="gene designation" value="dot-1.1"/>
</dbReference>
<dbReference type="WormBase" id="Y39G10AR.18b">
    <molecule id="Q6AW06-2"/>
    <property type="protein sequence ID" value="CE36735"/>
    <property type="gene ID" value="WBGene00021474"/>
    <property type="gene designation" value="dot-1.1"/>
</dbReference>
<dbReference type="WormBase" id="Y39G10AR.18c">
    <molecule id="Q6AW06-3"/>
    <property type="protein sequence ID" value="CE49789"/>
    <property type="gene ID" value="WBGene00021474"/>
    <property type="gene designation" value="dot-1.1"/>
</dbReference>
<dbReference type="eggNOG" id="KOG3924">
    <property type="taxonomic scope" value="Eukaryota"/>
</dbReference>
<dbReference type="GeneTree" id="ENSGT00390000013515"/>
<dbReference type="HOGENOM" id="CLU_310847_0_0_1"/>
<dbReference type="InParanoid" id="Q6AW06"/>
<dbReference type="OMA" id="NAISHTT"/>
<dbReference type="OrthoDB" id="443402at2759"/>
<dbReference type="Reactome" id="R-CEL-3214841">
    <property type="pathway name" value="PKMTs methylate histone lysines"/>
</dbReference>
<dbReference type="PRO" id="PR:Q6AW06"/>
<dbReference type="Proteomes" id="UP000001940">
    <property type="component" value="Chromosome I"/>
</dbReference>
<dbReference type="Bgee" id="WBGene00021474">
    <property type="expression patterns" value="Expressed in pharyngeal muscle cell (C elegans) and 4 other cell types or tissues"/>
</dbReference>
<dbReference type="GO" id="GO:0005694">
    <property type="term" value="C:chromosome"/>
    <property type="evidence" value="ECO:0000303"/>
    <property type="project" value="ComplexPortal"/>
</dbReference>
<dbReference type="GO" id="GO:0000781">
    <property type="term" value="C:chromosome, telomeric region"/>
    <property type="evidence" value="ECO:0007669"/>
    <property type="project" value="GOC"/>
</dbReference>
<dbReference type="GO" id="GO:0035097">
    <property type="term" value="C:histone methyltransferase complex"/>
    <property type="evidence" value="ECO:0000314"/>
    <property type="project" value="ComplexPortal"/>
</dbReference>
<dbReference type="GO" id="GO:0005634">
    <property type="term" value="C:nucleus"/>
    <property type="evidence" value="ECO:0000318"/>
    <property type="project" value="GO_Central"/>
</dbReference>
<dbReference type="GO" id="GO:0003677">
    <property type="term" value="F:DNA binding"/>
    <property type="evidence" value="ECO:0007669"/>
    <property type="project" value="UniProtKB-KW"/>
</dbReference>
<dbReference type="GO" id="GO:0031151">
    <property type="term" value="F:histone H3K79 methyltransferase activity"/>
    <property type="evidence" value="ECO:0000318"/>
    <property type="project" value="GO_Central"/>
</dbReference>
<dbReference type="GO" id="GO:0140956">
    <property type="term" value="F:histone H3K79 trimethyltransferase activity"/>
    <property type="evidence" value="ECO:0007669"/>
    <property type="project" value="UniProtKB-EC"/>
</dbReference>
<dbReference type="GO" id="GO:0000077">
    <property type="term" value="P:DNA damage checkpoint signaling"/>
    <property type="evidence" value="ECO:0000318"/>
    <property type="project" value="GO_Central"/>
</dbReference>
<dbReference type="GO" id="GO:0006281">
    <property type="term" value="P:DNA repair"/>
    <property type="evidence" value="ECO:0000318"/>
    <property type="project" value="GO_Central"/>
</dbReference>
<dbReference type="GO" id="GO:0032259">
    <property type="term" value="P:methylation"/>
    <property type="evidence" value="ECO:0007669"/>
    <property type="project" value="UniProtKB-KW"/>
</dbReference>
<dbReference type="GO" id="GO:0006357">
    <property type="term" value="P:regulation of transcription by RNA polymerase II"/>
    <property type="evidence" value="ECO:0000303"/>
    <property type="project" value="ComplexPortal"/>
</dbReference>
<dbReference type="GO" id="GO:0031509">
    <property type="term" value="P:subtelomeric heterochromatin formation"/>
    <property type="evidence" value="ECO:0000318"/>
    <property type="project" value="GO_Central"/>
</dbReference>
<dbReference type="CDD" id="cd02440">
    <property type="entry name" value="AdoMet_MTases"/>
    <property type="match status" value="1"/>
</dbReference>
<dbReference type="FunFam" id="3.40.50.150:FF:000033">
    <property type="entry name" value="Histone-lysine N-methyltransferase, H3 lysine-79 specific"/>
    <property type="match status" value="1"/>
</dbReference>
<dbReference type="Gene3D" id="3.40.50.150">
    <property type="entry name" value="Vaccinia Virus protein VP39"/>
    <property type="match status" value="1"/>
</dbReference>
<dbReference type="InterPro" id="IPR025789">
    <property type="entry name" value="DOT1_dom"/>
</dbReference>
<dbReference type="InterPro" id="IPR030445">
    <property type="entry name" value="H3-K79_meTrfase"/>
</dbReference>
<dbReference type="InterPro" id="IPR029063">
    <property type="entry name" value="SAM-dependent_MTases_sf"/>
</dbReference>
<dbReference type="PANTHER" id="PTHR21451">
    <property type="entry name" value="HISTONE H3 METHYLTRANSFERASE"/>
    <property type="match status" value="1"/>
</dbReference>
<dbReference type="PANTHER" id="PTHR21451:SF0">
    <property type="entry name" value="HISTONE-LYSINE N-METHYLTRANSFERASE, H3 LYSINE-79 SPECIFIC"/>
    <property type="match status" value="1"/>
</dbReference>
<dbReference type="Pfam" id="PF08123">
    <property type="entry name" value="DOT1"/>
    <property type="match status" value="1"/>
</dbReference>
<dbReference type="SUPFAM" id="SSF53335">
    <property type="entry name" value="S-adenosyl-L-methionine-dependent methyltransferases"/>
    <property type="match status" value="1"/>
</dbReference>
<dbReference type="PROSITE" id="PS51569">
    <property type="entry name" value="DOT1"/>
    <property type="match status" value="1"/>
</dbReference>
<evidence type="ECO:0000255" key="1">
    <source>
        <dbReference type="PROSITE-ProRule" id="PRU00902"/>
    </source>
</evidence>
<evidence type="ECO:0000255" key="2">
    <source>
        <dbReference type="RuleBase" id="RU271113"/>
    </source>
</evidence>
<evidence type="ECO:0000256" key="3">
    <source>
        <dbReference type="SAM" id="MobiDB-lite"/>
    </source>
</evidence>
<evidence type="ECO:0000269" key="4">
    <source>
    </source>
</evidence>
<evidence type="ECO:0000269" key="5">
    <source>
    </source>
</evidence>
<evidence type="ECO:0000303" key="6">
    <source>
    </source>
</evidence>
<evidence type="ECO:0000305" key="7"/>
<evidence type="ECO:0000305" key="8">
    <source>
    </source>
</evidence>
<evidence type="ECO:0000312" key="9">
    <source>
        <dbReference type="Proteomes" id="UP000001940"/>
    </source>
</evidence>
<evidence type="ECO:0000312" key="10">
    <source>
        <dbReference type="WormBase" id="Y39G10AR.18a"/>
    </source>
</evidence>
<evidence type="ECO:0000312" key="11">
    <source>
        <dbReference type="WormBase" id="Y39G10AR.18b"/>
    </source>
</evidence>
<evidence type="ECO:0000312" key="12">
    <source>
        <dbReference type="WormBase" id="Y39G10AR.18c"/>
    </source>
</evidence>
<gene>
    <name evidence="6 10" type="primary">dot-1.1</name>
    <name evidence="10" type="ORF">Y39G10AR.18</name>
</gene>
<sequence>MSEADAGARDESPSRTAEEPAAAMRIKEERRSSSVDVVDVGNGELLVLHSIFYQGKTLRLPGNRAHMYPVVFQMIKGVCSLVKQLVVAFPKGWDQNTPSISEIAALTKSFNRVAKPFASNWSGSYNTDTLKEWGEPNCSAEVAKAITTYAYECAVPRPADLNQHYKSFTSETYGETNPEQLISIIDELNIGPQDVFVDLGSGIGQLVCLTAAYAKCKKSVGIELSQVPSNFAQDLAGYFKKFMSHFGKNHGKFEHIQGDFLNPKFKQLICEEATVIFINNFAFDAALMLRINTELLQDLKHGTRIVTTKELGTNKKEITFRSTSDINAISHTTELKTTESAVSWTSSHVKFWLTTIDHTKLIKYYEDQRRRQEVKSSREGSEISDGRDMGLKKRKSQRESSVHPDKLQKTEQAAASSHQSPKWNEPDTDYTPPAKKPKKEKLLREQQDATPASSHHHGASSSSGKDREKEKEKKKNKIYEEKKVKTPKPPKSSSSRYSSETPTSHHHHHRSNSISHSSDVIRPSQPKATAPPPPLVPAPARATASTPPPAPPAARAQSPKREEPLEPPTDLIHHGGGQLDAKTMNALHTIREAATTSAQAAAIQDAINSVLSQPTEASPSAFGPPLAHLPAPVAIYPTPPPPPAPAPAAPQQASAAPAAPNVMPVCTEIAAEQRHTFMIPPTDPFYNMIVSYYFAMKQFCNQSKTADPEFVGRLRLDIEAEEARRAELKESITLTSTQIDELLATGVNTLKSRLDELGMPSVTDVTELLAGSKQIVTQHKGLTNTVAQMENSVAVEEQKLRLIGGPDAVRYFDEAMSHPNVDIAKLTDLVITTRPPNFVAQILLPDDSPTASIDSKVSPSSSSSRRPRQPKPRANNTAAGAGGGGKRGTSGGRKSDGGGGGGATEDVELEIRQFVQHALKVDNAVKEKERKARGNFMAAAADRIPR</sequence>
<feature type="chain" id="PRO_0000448083" description="Histone-lysine N-methyltransferase, H3 lysine-79 specific">
    <location>
        <begin position="1"/>
        <end position="946"/>
    </location>
</feature>
<feature type="domain" description="DOT1" evidence="1">
    <location>
        <begin position="54"/>
        <end position="369"/>
    </location>
</feature>
<feature type="region of interest" description="Disordered" evidence="3">
    <location>
        <begin position="1"/>
        <end position="28"/>
    </location>
</feature>
<feature type="region of interest" description="Disordered" evidence="3">
    <location>
        <begin position="368"/>
        <end position="577"/>
    </location>
</feature>
<feature type="region of interest" description="Disordered" evidence="3">
    <location>
        <begin position="849"/>
        <end position="905"/>
    </location>
</feature>
<feature type="compositionally biased region" description="Basic and acidic residues" evidence="3">
    <location>
        <begin position="1"/>
        <end position="18"/>
    </location>
</feature>
<feature type="compositionally biased region" description="Basic and acidic residues" evidence="3">
    <location>
        <begin position="368"/>
        <end position="409"/>
    </location>
</feature>
<feature type="compositionally biased region" description="Polar residues" evidence="3">
    <location>
        <begin position="410"/>
        <end position="422"/>
    </location>
</feature>
<feature type="compositionally biased region" description="Basic and acidic residues" evidence="3">
    <location>
        <begin position="464"/>
        <end position="484"/>
    </location>
</feature>
<feature type="compositionally biased region" description="Low complexity" evidence="3">
    <location>
        <begin position="491"/>
        <end position="502"/>
    </location>
</feature>
<feature type="compositionally biased region" description="Low complexity" evidence="3">
    <location>
        <begin position="512"/>
        <end position="528"/>
    </location>
</feature>
<feature type="compositionally biased region" description="Low complexity" evidence="3">
    <location>
        <begin position="855"/>
        <end position="864"/>
    </location>
</feature>
<feature type="compositionally biased region" description="Gly residues" evidence="3">
    <location>
        <begin position="880"/>
        <end position="903"/>
    </location>
</feature>
<feature type="binding site" evidence="1">
    <location>
        <begin position="173"/>
        <end position="176"/>
    </location>
    <ligand>
        <name>S-adenosyl-L-methionine</name>
        <dbReference type="ChEBI" id="CHEBI:59789"/>
    </ligand>
</feature>
<feature type="binding site" evidence="1">
    <location>
        <begin position="196"/>
        <end position="205"/>
    </location>
    <ligand>
        <name>S-adenosyl-L-methionine</name>
        <dbReference type="ChEBI" id="CHEBI:59789"/>
    </ligand>
</feature>
<feature type="binding site" evidence="1">
    <location>
        <position position="223"/>
    </location>
    <ligand>
        <name>S-adenosyl-L-methionine</name>
        <dbReference type="ChEBI" id="CHEBI:59789"/>
    </ligand>
</feature>
<feature type="binding site" evidence="1">
    <location>
        <begin position="259"/>
        <end position="260"/>
    </location>
    <ligand>
        <name>S-adenosyl-L-methionine</name>
        <dbReference type="ChEBI" id="CHEBI:59789"/>
    </ligand>
</feature>
<feature type="splice variant" id="VSP_060335" description="In isoform c." evidence="7">
    <location>
        <begin position="1"/>
        <end position="583"/>
    </location>
</feature>
<feature type="splice variant" id="VSP_060336" description="In isoform b." evidence="7">
    <original>SEADAGARDESPSRTAEEPAAAMRIKEERRSSSVDVVDVGNGELLVLHSIFYQGKTLRLPGNRAHMYPVVFQMIKGVCSLVKQLVVAFPKGWDQNTPSISEIAALTKSFNRVAKPFASNWSGSYNTDTLKEWGEPNCSAEVAKAITTYAYECAVPRPADLNQHYKSFTSETYGETNPEQLISIIDELNIGPQDVFVDLGSGIGQLVCLTAAYAKCKKSVGIELSQVPSNFAQDLAGYFKKFMSHFGKNHGKFEHIQGDFLNPKFKQLICEEATVIFINNFAFDAALMLRINTELLQDLKHGTRIVTTKELGTNKKEITFRSTSDINAISHTTELKTTESAVSWTSSHVKFWLTTIDHTKLIKYYEDQRRRQEVKSSREGSEISDGRDMGLKKRKSQRESSVHPDKLQK</original>
    <variation>EISSSKKSSASPSHHGPGALGHPDPPGGAGGEDDVFFGRTTRLMWKAQ</variation>
    <location>
        <begin position="2"/>
        <end position="409"/>
    </location>
</feature>
<reference evidence="9" key="1">
    <citation type="journal article" date="1998" name="Science">
        <title>Genome sequence of the nematode C. elegans: a platform for investigating biology.</title>
        <authorList>
            <consortium name="The C. elegans sequencing consortium"/>
        </authorList>
    </citation>
    <scope>NUCLEOTIDE SEQUENCE [LARGE SCALE GENOMIC DNA]</scope>
    <source>
        <strain evidence="9">Bristol N2</strain>
    </source>
</reference>
<reference evidence="7" key="2">
    <citation type="journal article" date="2013" name="Mol. Cell">
        <title>The ZFP-1(AF10)/DOT-1 complex opposes H2B ubiquitination to reduce Pol II transcription.</title>
        <authorList>
            <person name="Cecere G."/>
            <person name="Hoersch S."/>
            <person name="Jensen M.B."/>
            <person name="Dixit S."/>
            <person name="Grishok A."/>
        </authorList>
    </citation>
    <scope>FUNCTION</scope>
    <scope>CATALYTIC ACTIVITY</scope>
    <scope>INTERACTION WITH ZFP-1</scope>
    <scope>SUBCELLULAR LOCATION</scope>
</reference>
<reference evidence="7" key="3">
    <citation type="journal article" date="2019" name="G3 (Bethesda)">
        <title>Restriction of cellular plasticity of differentiated cells mediated by chromatin modifiers, transcription factors and protein kinases.</title>
        <authorList>
            <person name="Rahe D."/>
            <person name="Hobert O."/>
        </authorList>
    </citation>
    <scope>FUNCTION</scope>
    <scope>DISRUPTION PHENOTYPE</scope>
</reference>
<accession>Q6AW06</accession>
<accession>A0A061AD87</accession>
<accession>Q6AW05</accession>
<keyword id="KW-0025">Alternative splicing</keyword>
<keyword id="KW-0156">Chromatin regulator</keyword>
<keyword id="KW-0158">Chromosome</keyword>
<keyword id="KW-0238">DNA-binding</keyword>
<keyword id="KW-0489">Methyltransferase</keyword>
<keyword id="KW-0539">Nucleus</keyword>
<keyword id="KW-1185">Reference proteome</keyword>
<keyword id="KW-0949">S-adenosyl-L-methionine</keyword>
<keyword id="KW-0808">Transferase</keyword>
<proteinExistence type="evidence at protein level"/>
<comment type="function">
    <text evidence="4 5 8">Histone methyltransferase, which in complex with zfp-1, methylates 'Lys-79' of histone H3 to activate transcription (Probable). During stress, the zfp-1-dot-1.1 complex also plays a role in the deubiquitination of histone H2B sites, which negatively modulates the RNA polymerase II-induced transcription of highly expressed genes (PubMed:23806335). Involved in controlling tissue-specific gene expression, particularly in the epidermis (PubMed:31088904).</text>
</comment>
<comment type="catalytic activity">
    <reaction evidence="1 8">
        <text>L-lysyl(79)-[histone H3] + 3 S-adenosyl-L-methionine = N(6),N(6),N(6)-trimethyl-L-lysyl(79)-[histone H3] + 3 S-adenosyl-L-homocysteine + 3 H(+)</text>
        <dbReference type="Rhea" id="RHEA:60328"/>
        <dbReference type="Rhea" id="RHEA-COMP:15549"/>
        <dbReference type="Rhea" id="RHEA-COMP:15552"/>
        <dbReference type="ChEBI" id="CHEBI:15378"/>
        <dbReference type="ChEBI" id="CHEBI:29969"/>
        <dbReference type="ChEBI" id="CHEBI:57856"/>
        <dbReference type="ChEBI" id="CHEBI:59789"/>
        <dbReference type="ChEBI" id="CHEBI:61961"/>
        <dbReference type="EC" id="2.1.1.360"/>
    </reaction>
</comment>
<comment type="subunit">
    <text evidence="4">Interacts with zfp-1 (via C-terminus) to form a heterodimer known as the zfp-1-dot-1.1 complex or DotCom complex.</text>
</comment>
<comment type="interaction">
    <interactant intactId="EBI-21195283">
        <id>Q6AW06</id>
    </interactant>
    <interactant intactId="EBI-6740300">
        <id>P34447</id>
        <label>zfp-1</label>
    </interactant>
    <organismsDiffer>false</organismsDiffer>
    <experiments>3</experiments>
</comment>
<comment type="subcellular location">
    <subcellularLocation>
        <location evidence="2 8">Nucleus</location>
    </subcellularLocation>
    <subcellularLocation>
        <location evidence="8">Chromosome</location>
    </subcellularLocation>
    <text evidence="4">zfp-1 and dot-1.1 colocalize to promoters of highly expressed genes (PubMed:23806335). zfp-1 recruits dot-1.1 (PubMed:23806335).</text>
</comment>
<comment type="alternative products">
    <event type="alternative splicing"/>
    <isoform>
        <id>Q6AW06-1</id>
        <name evidence="10">a</name>
        <sequence type="displayed"/>
    </isoform>
    <isoform>
        <id>Q6AW06-2</id>
        <name evidence="11">b</name>
        <sequence type="described" ref="VSP_060336"/>
    </isoform>
    <isoform>
        <id>Q6AW06-3</id>
        <name evidence="12">c</name>
        <sequence type="described" ref="VSP_060335"/>
    </isoform>
</comment>
<comment type="disruption phenotype">
    <text evidence="5">RNAi-mediated knockdown results in the ectopic expression of the neuronal identity-inducing transcription factor che-1 in the epidermis.</text>
</comment>
<comment type="miscellaneous">
    <text evidence="2">In contrast to other lysine histone methyltransferases, it does not contain a SET domain, suggesting the existence of another mechanism for methylation of lysine residues of histones.</text>
</comment>
<comment type="similarity">
    <text evidence="1">Belongs to the class I-like SAM-binding methyltransferase superfamily. DOT1 family.</text>
</comment>
<name>DOT11_CAEEL</name>
<organism evidence="9">
    <name type="scientific">Caenorhabditis elegans</name>
    <dbReference type="NCBI Taxonomy" id="6239"/>
    <lineage>
        <taxon>Eukaryota</taxon>
        <taxon>Metazoa</taxon>
        <taxon>Ecdysozoa</taxon>
        <taxon>Nematoda</taxon>
        <taxon>Chromadorea</taxon>
        <taxon>Rhabditida</taxon>
        <taxon>Rhabditina</taxon>
        <taxon>Rhabditomorpha</taxon>
        <taxon>Rhabditoidea</taxon>
        <taxon>Rhabditidae</taxon>
        <taxon>Peloderinae</taxon>
        <taxon>Caenorhabditis</taxon>
    </lineage>
</organism>
<protein>
    <recommendedName>
        <fullName evidence="2">Histone-lysine N-methyltransferase, H3 lysine-79 specific</fullName>
        <ecNumber evidence="1 8">2.1.1.360</ecNumber>
    </recommendedName>
    <alternativeName>
        <fullName evidence="2">Histone H3-K79 methyltransferase</fullName>
    </alternativeName>
</protein>